<proteinExistence type="evidence at protein level"/>
<reference key="1">
    <citation type="journal article" date="2000" name="Nature">
        <title>Complete genome sequence of Pseudomonas aeruginosa PAO1, an opportunistic pathogen.</title>
        <authorList>
            <person name="Stover C.K."/>
            <person name="Pham X.-Q.T."/>
            <person name="Erwin A.L."/>
            <person name="Mizoguchi S.D."/>
            <person name="Warrener P."/>
            <person name="Hickey M.J."/>
            <person name="Brinkman F.S.L."/>
            <person name="Hufnagle W.O."/>
            <person name="Kowalik D.J."/>
            <person name="Lagrou M."/>
            <person name="Garber R.L."/>
            <person name="Goltry L."/>
            <person name="Tolentino E."/>
            <person name="Westbrock-Wadman S."/>
            <person name="Yuan Y."/>
            <person name="Brody L.L."/>
            <person name="Coulter S.N."/>
            <person name="Folger K.R."/>
            <person name="Kas A."/>
            <person name="Larbig K."/>
            <person name="Lim R.M."/>
            <person name="Smith K.A."/>
            <person name="Spencer D.H."/>
            <person name="Wong G.K.-S."/>
            <person name="Wu Z."/>
            <person name="Paulsen I.T."/>
            <person name="Reizer J."/>
            <person name="Saier M.H. Jr."/>
            <person name="Hancock R.E.W."/>
            <person name="Lory S."/>
            <person name="Olson M.V."/>
        </authorList>
    </citation>
    <scope>NUCLEOTIDE SEQUENCE [LARGE SCALE GENOMIC DNA]</scope>
    <source>
        <strain>ATCC 15692 / DSM 22644 / CIP 104116 / JCM 14847 / LMG 12228 / 1C / PRS 101 / PAO1</strain>
    </source>
</reference>
<reference key="2">
    <citation type="journal article" date="2011" name="Acta Crystallogr. F">
        <title>Structure of PA4019, a putative aromatic acid decarboxylase from Pseudomonas aeruginosa.</title>
        <authorList>
            <person name="Kopec J."/>
            <person name="Schnell R."/>
            <person name="Schneider G."/>
        </authorList>
    </citation>
    <scope>X-RAY CRYSTALLOGRAPHY (1.50 ANGSTROMS) IN COMPLEX WITH FMN</scope>
</reference>
<reference key="3">
    <citation type="journal article" date="2015" name="Nature">
        <title>UbiX is a flavin prenyltransferase required for bacterial ubiquinone biosynthesis.</title>
        <authorList>
            <person name="White M.D."/>
            <person name="Payne K.A."/>
            <person name="Fisher K."/>
            <person name="Marshall S.A."/>
            <person name="Parker D."/>
            <person name="Rattray N.J."/>
            <person name="Trivedi D.K."/>
            <person name="Goodacre R."/>
            <person name="Rigby S.E."/>
            <person name="Scrutton N.S."/>
            <person name="Hay S."/>
            <person name="Leys D."/>
        </authorList>
    </citation>
    <scope>X-RAY CRYSTALLOGRAPHY (1.40 ANGSTROMS) IN COMPLEX WITH FMN AND DMAP</scope>
    <scope>FUNCTION</scope>
    <scope>MUTAGENESIS OF GLU-49</scope>
    <scope>CATALYTIC ACTIVITY</scope>
</reference>
<dbReference type="EC" id="2.5.1.129" evidence="1 3"/>
<dbReference type="EMBL" id="AE004091">
    <property type="protein sequence ID" value="AAG07406.1"/>
    <property type="molecule type" value="Genomic_DNA"/>
</dbReference>
<dbReference type="PIR" id="H83144">
    <property type="entry name" value="H83144"/>
</dbReference>
<dbReference type="RefSeq" id="NP_252708.1">
    <property type="nucleotide sequence ID" value="NC_002516.2"/>
</dbReference>
<dbReference type="RefSeq" id="WP_003093227.1">
    <property type="nucleotide sequence ID" value="NZ_QZGE01000038.1"/>
</dbReference>
<dbReference type="PDB" id="3ZQU">
    <property type="method" value="X-ray"/>
    <property type="resolution" value="1.50 A"/>
    <property type="chains" value="A=1-209"/>
</dbReference>
<dbReference type="PDB" id="4ZAF">
    <property type="method" value="X-ray"/>
    <property type="resolution" value="1.71 A"/>
    <property type="chains" value="A=1-209"/>
</dbReference>
<dbReference type="PDB" id="4ZAG">
    <property type="method" value="X-ray"/>
    <property type="resolution" value="1.68 A"/>
    <property type="chains" value="A=1-209"/>
</dbReference>
<dbReference type="PDB" id="4ZAL">
    <property type="method" value="X-ray"/>
    <property type="resolution" value="1.62 A"/>
    <property type="chains" value="A=1-209"/>
</dbReference>
<dbReference type="PDB" id="4ZAN">
    <property type="method" value="X-ray"/>
    <property type="resolution" value="1.76 A"/>
    <property type="chains" value="A=1-209"/>
</dbReference>
<dbReference type="PDB" id="4ZAV">
    <property type="method" value="X-ray"/>
    <property type="resolution" value="1.40 A"/>
    <property type="chains" value="A=1-209"/>
</dbReference>
<dbReference type="PDB" id="4ZAW">
    <property type="method" value="X-ray"/>
    <property type="resolution" value="1.89 A"/>
    <property type="chains" value="A=1-209"/>
</dbReference>
<dbReference type="PDB" id="4ZAX">
    <property type="method" value="X-ray"/>
    <property type="resolution" value="1.61 A"/>
    <property type="chains" value="A=1-209"/>
</dbReference>
<dbReference type="PDB" id="4ZAY">
    <property type="method" value="X-ray"/>
    <property type="resolution" value="1.54 A"/>
    <property type="chains" value="A=1-209"/>
</dbReference>
<dbReference type="PDB" id="4ZAZ">
    <property type="method" value="X-ray"/>
    <property type="resolution" value="1.45 A"/>
    <property type="chains" value="A=1-209"/>
</dbReference>
<dbReference type="PDBsum" id="3ZQU"/>
<dbReference type="PDBsum" id="4ZAF"/>
<dbReference type="PDBsum" id="4ZAG"/>
<dbReference type="PDBsum" id="4ZAL"/>
<dbReference type="PDBsum" id="4ZAN"/>
<dbReference type="PDBsum" id="4ZAV"/>
<dbReference type="PDBsum" id="4ZAW"/>
<dbReference type="PDBsum" id="4ZAX"/>
<dbReference type="PDBsum" id="4ZAY"/>
<dbReference type="PDBsum" id="4ZAZ"/>
<dbReference type="SMR" id="Q9HX08"/>
<dbReference type="DIP" id="DIP-61586N"/>
<dbReference type="FunCoup" id="Q9HX08">
    <property type="interactions" value="344"/>
</dbReference>
<dbReference type="STRING" id="208964.PA4019"/>
<dbReference type="PaxDb" id="208964-PA4019"/>
<dbReference type="DNASU" id="878992"/>
<dbReference type="GeneID" id="878992"/>
<dbReference type="KEGG" id="pae:PA4019"/>
<dbReference type="PATRIC" id="fig|208964.12.peg.4211"/>
<dbReference type="PseudoCAP" id="PA4019"/>
<dbReference type="HOGENOM" id="CLU_074522_0_0_6"/>
<dbReference type="InParanoid" id="Q9HX08"/>
<dbReference type="OrthoDB" id="9781577at2"/>
<dbReference type="PhylomeDB" id="Q9HX08"/>
<dbReference type="BioCyc" id="MetaCyc:MONOMER-19454"/>
<dbReference type="BioCyc" id="PAER208964:G1FZ6-4092-MONOMER"/>
<dbReference type="BRENDA" id="2.5.1.129">
    <property type="organism ID" value="5087"/>
</dbReference>
<dbReference type="EvolutionaryTrace" id="Q9HX08"/>
<dbReference type="Proteomes" id="UP000002438">
    <property type="component" value="Chromosome"/>
</dbReference>
<dbReference type="GO" id="GO:0016831">
    <property type="term" value="F:carboxy-lyase activity"/>
    <property type="evidence" value="ECO:0000318"/>
    <property type="project" value="GO_Central"/>
</dbReference>
<dbReference type="GO" id="GO:0106141">
    <property type="term" value="F:flavin prenyltransferase activity"/>
    <property type="evidence" value="ECO:0007669"/>
    <property type="project" value="UniProtKB-EC"/>
</dbReference>
<dbReference type="GO" id="GO:0004659">
    <property type="term" value="F:prenyltransferase activity"/>
    <property type="evidence" value="ECO:0000314"/>
    <property type="project" value="PseudoCAP"/>
</dbReference>
<dbReference type="FunFam" id="3.40.50.1950:FF:000001">
    <property type="entry name" value="Flavin prenyltransferase UbiX"/>
    <property type="match status" value="1"/>
</dbReference>
<dbReference type="Gene3D" id="3.40.50.1950">
    <property type="entry name" value="Flavin prenyltransferase-like"/>
    <property type="match status" value="1"/>
</dbReference>
<dbReference type="HAMAP" id="MF_01984">
    <property type="entry name" value="ubiX_pad"/>
    <property type="match status" value="1"/>
</dbReference>
<dbReference type="InterPro" id="IPR036551">
    <property type="entry name" value="Flavin_trans-like"/>
</dbReference>
<dbReference type="InterPro" id="IPR003382">
    <property type="entry name" value="Flavoprotein"/>
</dbReference>
<dbReference type="InterPro" id="IPR004507">
    <property type="entry name" value="UbiX-like"/>
</dbReference>
<dbReference type="NCBIfam" id="NF004685">
    <property type="entry name" value="PRK06029.1"/>
    <property type="match status" value="1"/>
</dbReference>
<dbReference type="NCBIfam" id="TIGR00421">
    <property type="entry name" value="ubiX_pad"/>
    <property type="match status" value="1"/>
</dbReference>
<dbReference type="PANTHER" id="PTHR43374">
    <property type="entry name" value="FLAVIN PRENYLTRANSFERASE"/>
    <property type="match status" value="1"/>
</dbReference>
<dbReference type="PANTHER" id="PTHR43374:SF1">
    <property type="entry name" value="FLAVIN PRENYLTRANSFERASE PAD1, MITOCHONDRIAL"/>
    <property type="match status" value="1"/>
</dbReference>
<dbReference type="Pfam" id="PF02441">
    <property type="entry name" value="Flavoprotein"/>
    <property type="match status" value="1"/>
</dbReference>
<dbReference type="SUPFAM" id="SSF52507">
    <property type="entry name" value="Homo-oligomeric flavin-containing Cys decarboxylases, HFCD"/>
    <property type="match status" value="1"/>
</dbReference>
<name>UBIX_PSEAE</name>
<gene>
    <name evidence="1 4" type="primary">ubiX</name>
    <name type="ordered locus">PA4019</name>
</gene>
<protein>
    <recommendedName>
        <fullName evidence="1 4">Flavin prenyltransferase UbiX</fullName>
        <ecNumber evidence="1 3">2.5.1.129</ecNumber>
    </recommendedName>
</protein>
<organism>
    <name type="scientific">Pseudomonas aeruginosa (strain ATCC 15692 / DSM 22644 / CIP 104116 / JCM 14847 / LMG 12228 / 1C / PRS 101 / PAO1)</name>
    <dbReference type="NCBI Taxonomy" id="208964"/>
    <lineage>
        <taxon>Bacteria</taxon>
        <taxon>Pseudomonadati</taxon>
        <taxon>Pseudomonadota</taxon>
        <taxon>Gammaproteobacteria</taxon>
        <taxon>Pseudomonadales</taxon>
        <taxon>Pseudomonadaceae</taxon>
        <taxon>Pseudomonas</taxon>
    </lineage>
</organism>
<accession>Q9HX08</accession>
<sequence length="209" mass="22367">MSGPERITLAMTGASGAQYGLRLLDCLVQEEREVHFLISKAAQLVMATETDVALPAKPQAMQAFLTEYCGAAAGQIRVFGQNDWMAPPASGSSAPNAMVICPCSTGTLSAVATGACNNLIERAADVALKERRPLVLVPREAPFSSIHLENMLKLSNLGAVILPAAPGFYHQPQSVEDLVDFVVARILNTLGIPQDMLPRWGEQHLVSDE</sequence>
<comment type="function">
    <text evidence="1 3">Flavin prenyltransferase that catalyzes the synthesis of the prenylated FMN cofactor (prenyl-FMN) for 4-hydroxy-3-polyprenylbenzoic acid decarboxylase UbiD. The prenyltransferase is metal-independent and links a dimethylallyl moiety from dimethylallyl monophosphate (DMAP) to the flavin N5 and C6 atoms of FMN.</text>
</comment>
<comment type="catalytic activity">
    <reaction evidence="1 3">
        <text>dimethylallyl phosphate + FMNH2 = prenylated FMNH2 + phosphate</text>
        <dbReference type="Rhea" id="RHEA:37743"/>
        <dbReference type="ChEBI" id="CHEBI:43474"/>
        <dbReference type="ChEBI" id="CHEBI:57618"/>
        <dbReference type="ChEBI" id="CHEBI:87467"/>
        <dbReference type="ChEBI" id="CHEBI:88052"/>
        <dbReference type="EC" id="2.5.1.129"/>
    </reaction>
</comment>
<comment type="similarity">
    <text evidence="1">Belongs to the UbiX/PAD1 family.</text>
</comment>
<evidence type="ECO:0000255" key="1">
    <source>
        <dbReference type="HAMAP-Rule" id="MF_01984"/>
    </source>
</evidence>
<evidence type="ECO:0000269" key="2">
    <source>
    </source>
</evidence>
<evidence type="ECO:0000269" key="3">
    <source>
    </source>
</evidence>
<evidence type="ECO:0000303" key="4">
    <source>
    </source>
</evidence>
<evidence type="ECO:0007829" key="5">
    <source>
        <dbReference type="PDB" id="4ZAV"/>
    </source>
</evidence>
<feature type="chain" id="PRO_0000134970" description="Flavin prenyltransferase UbiX">
    <location>
        <begin position="1"/>
        <end position="209"/>
    </location>
</feature>
<feature type="binding site" evidence="1 2">
    <location>
        <begin position="13"/>
        <end position="15"/>
    </location>
    <ligand>
        <name>FMN</name>
        <dbReference type="ChEBI" id="CHEBI:58210"/>
    </ligand>
</feature>
<feature type="binding site" evidence="1 2">
    <location>
        <position position="39"/>
    </location>
    <ligand>
        <name>FMN</name>
        <dbReference type="ChEBI" id="CHEBI:58210"/>
    </ligand>
</feature>
<feature type="binding site" evidence="1 2">
    <location>
        <begin position="104"/>
        <end position="107"/>
    </location>
    <ligand>
        <name>FMN</name>
        <dbReference type="ChEBI" id="CHEBI:58210"/>
    </ligand>
</feature>
<feature type="binding site" evidence="1 2">
    <location>
        <position position="116"/>
    </location>
    <ligand>
        <name>FMN</name>
        <dbReference type="ChEBI" id="CHEBI:58210"/>
    </ligand>
</feature>
<feature type="binding site" evidence="1 2">
    <location>
        <position position="139"/>
    </location>
    <ligand>
        <name>FMN</name>
        <dbReference type="ChEBI" id="CHEBI:58210"/>
    </ligand>
</feature>
<feature type="binding site" evidence="1 3">
    <location>
        <position position="169"/>
    </location>
    <ligand>
        <name>dimethylallyl phosphate</name>
        <dbReference type="ChEBI" id="CHEBI:88052"/>
    </ligand>
</feature>
<feature type="binding site" evidence="1 3">
    <location>
        <position position="185"/>
    </location>
    <ligand>
        <name>dimethylallyl phosphate</name>
        <dbReference type="ChEBI" id="CHEBI:88052"/>
    </ligand>
</feature>
<feature type="mutagenesis site" description="Severely compromises catalytic activity." evidence="3">
    <original>E</original>
    <variation>Q</variation>
    <location>
        <position position="49"/>
    </location>
</feature>
<feature type="mutagenesis site" description="Severely compromises catalytic activity." evidence="3">
    <original>Y</original>
    <variation>F</variation>
    <location>
        <position position="169"/>
    </location>
</feature>
<feature type="strand" evidence="5">
    <location>
        <begin position="5"/>
        <end position="11"/>
    </location>
</feature>
<feature type="strand" evidence="5">
    <location>
        <begin position="13"/>
        <end position="15"/>
    </location>
</feature>
<feature type="helix" evidence="5">
    <location>
        <begin position="17"/>
        <end position="29"/>
    </location>
</feature>
<feature type="strand" evidence="5">
    <location>
        <begin position="33"/>
        <end position="38"/>
    </location>
</feature>
<feature type="helix" evidence="5">
    <location>
        <begin position="40"/>
        <end position="49"/>
    </location>
</feature>
<feature type="helix" evidence="5">
    <location>
        <begin position="58"/>
        <end position="69"/>
    </location>
</feature>
<feature type="turn" evidence="5">
    <location>
        <begin position="73"/>
        <end position="75"/>
    </location>
</feature>
<feature type="strand" evidence="5">
    <location>
        <begin position="76"/>
        <end position="78"/>
    </location>
</feature>
<feature type="helix" evidence="5">
    <location>
        <begin position="87"/>
        <end position="89"/>
    </location>
</feature>
<feature type="strand" evidence="5">
    <location>
        <begin position="97"/>
        <end position="103"/>
    </location>
</feature>
<feature type="helix" evidence="5">
    <location>
        <begin position="105"/>
        <end position="113"/>
    </location>
</feature>
<feature type="helix" evidence="5">
    <location>
        <begin position="119"/>
        <end position="130"/>
    </location>
</feature>
<feature type="strand" evidence="5">
    <location>
        <begin position="134"/>
        <end position="138"/>
    </location>
</feature>
<feature type="helix" evidence="5">
    <location>
        <begin position="145"/>
        <end position="156"/>
    </location>
</feature>
<feature type="helix" evidence="5">
    <location>
        <begin position="175"/>
        <end position="190"/>
    </location>
</feature>
<feature type="strand" evidence="5">
    <location>
        <begin position="195"/>
        <end position="197"/>
    </location>
</feature>
<feature type="turn" evidence="5">
    <location>
        <begin position="200"/>
        <end position="203"/>
    </location>
</feature>
<keyword id="KW-0002">3D-structure</keyword>
<keyword id="KW-0285">Flavoprotein</keyword>
<keyword id="KW-0288">FMN</keyword>
<keyword id="KW-0637">Prenyltransferase</keyword>
<keyword id="KW-1185">Reference proteome</keyword>
<keyword id="KW-0808">Transferase</keyword>